<keyword id="KW-0963">Cytoplasm</keyword>
<keyword id="KW-0396">Initiation factor</keyword>
<keyword id="KW-0648">Protein biosynthesis</keyword>
<keyword id="KW-1185">Reference proteome</keyword>
<keyword id="KW-0694">RNA-binding</keyword>
<dbReference type="EMBL" id="CH408032">
    <property type="protein sequence ID" value="EAQ87981.1"/>
    <property type="molecule type" value="Genomic_DNA"/>
</dbReference>
<dbReference type="RefSeq" id="XP_001223814.1">
    <property type="nucleotide sequence ID" value="XM_001223813.1"/>
</dbReference>
<dbReference type="SMR" id="Q2H0U6"/>
<dbReference type="FunCoup" id="Q2H0U6">
    <property type="interactions" value="983"/>
</dbReference>
<dbReference type="STRING" id="306901.Q2H0U6"/>
<dbReference type="GeneID" id="4392923"/>
<dbReference type="VEuPathDB" id="FungiDB:CHGG_04600"/>
<dbReference type="eggNOG" id="KOG0122">
    <property type="taxonomic scope" value="Eukaryota"/>
</dbReference>
<dbReference type="HOGENOM" id="CLU_034595_0_0_1"/>
<dbReference type="InParanoid" id="Q2H0U6"/>
<dbReference type="OMA" id="ICQGDHF"/>
<dbReference type="OrthoDB" id="639027at2759"/>
<dbReference type="Proteomes" id="UP000001056">
    <property type="component" value="Unassembled WGS sequence"/>
</dbReference>
<dbReference type="GO" id="GO:0016282">
    <property type="term" value="C:eukaryotic 43S preinitiation complex"/>
    <property type="evidence" value="ECO:0007669"/>
    <property type="project" value="UniProtKB-UniRule"/>
</dbReference>
<dbReference type="GO" id="GO:0033290">
    <property type="term" value="C:eukaryotic 48S preinitiation complex"/>
    <property type="evidence" value="ECO:0007669"/>
    <property type="project" value="UniProtKB-UniRule"/>
</dbReference>
<dbReference type="GO" id="GO:0071540">
    <property type="term" value="C:eukaryotic translation initiation factor 3 complex, eIF3e"/>
    <property type="evidence" value="ECO:0007669"/>
    <property type="project" value="EnsemblFungi"/>
</dbReference>
<dbReference type="GO" id="GO:0071541">
    <property type="term" value="C:eukaryotic translation initiation factor 3 complex, eIF3m"/>
    <property type="evidence" value="ECO:0007669"/>
    <property type="project" value="EnsemblFungi"/>
</dbReference>
<dbReference type="GO" id="GO:0003723">
    <property type="term" value="F:RNA binding"/>
    <property type="evidence" value="ECO:0007669"/>
    <property type="project" value="UniProtKB-UniRule"/>
</dbReference>
<dbReference type="GO" id="GO:0003743">
    <property type="term" value="F:translation initiation factor activity"/>
    <property type="evidence" value="ECO:0007669"/>
    <property type="project" value="UniProtKB-UniRule"/>
</dbReference>
<dbReference type="GO" id="GO:0001732">
    <property type="term" value="P:formation of cytoplasmic translation initiation complex"/>
    <property type="evidence" value="ECO:0007669"/>
    <property type="project" value="UniProtKB-UniRule"/>
</dbReference>
<dbReference type="CDD" id="cd12933">
    <property type="entry name" value="eIF3G"/>
    <property type="match status" value="1"/>
</dbReference>
<dbReference type="CDD" id="cd12408">
    <property type="entry name" value="RRM_eIF3G_like"/>
    <property type="match status" value="1"/>
</dbReference>
<dbReference type="FunFam" id="3.30.70.330:FF:000328">
    <property type="entry name" value="Eukaryotic translation initiation factor 3 subunit G"/>
    <property type="match status" value="1"/>
</dbReference>
<dbReference type="Gene3D" id="3.30.70.330">
    <property type="match status" value="1"/>
</dbReference>
<dbReference type="HAMAP" id="MF_03006">
    <property type="entry name" value="eIF3g"/>
    <property type="match status" value="1"/>
</dbReference>
<dbReference type="InterPro" id="IPR017334">
    <property type="entry name" value="eIF3_g"/>
</dbReference>
<dbReference type="InterPro" id="IPR024675">
    <property type="entry name" value="eIF3g_N"/>
</dbReference>
<dbReference type="InterPro" id="IPR034240">
    <property type="entry name" value="eIF3G_RRM"/>
</dbReference>
<dbReference type="InterPro" id="IPR012677">
    <property type="entry name" value="Nucleotide-bd_a/b_plait_sf"/>
</dbReference>
<dbReference type="InterPro" id="IPR035979">
    <property type="entry name" value="RBD_domain_sf"/>
</dbReference>
<dbReference type="InterPro" id="IPR000504">
    <property type="entry name" value="RRM_dom"/>
</dbReference>
<dbReference type="PANTHER" id="PTHR10352">
    <property type="entry name" value="EUKARYOTIC TRANSLATION INITIATION FACTOR 3 SUBUNIT G"/>
    <property type="match status" value="1"/>
</dbReference>
<dbReference type="Pfam" id="PF12353">
    <property type="entry name" value="eIF3g"/>
    <property type="match status" value="1"/>
</dbReference>
<dbReference type="Pfam" id="PF00076">
    <property type="entry name" value="RRM_1"/>
    <property type="match status" value="1"/>
</dbReference>
<dbReference type="PIRSF" id="PIRSF037949">
    <property type="entry name" value="Transl_init_eIF-3_RNA-bind"/>
    <property type="match status" value="1"/>
</dbReference>
<dbReference type="SMART" id="SM00360">
    <property type="entry name" value="RRM"/>
    <property type="match status" value="1"/>
</dbReference>
<dbReference type="SUPFAM" id="SSF54928">
    <property type="entry name" value="RNA-binding domain, RBD"/>
    <property type="match status" value="1"/>
</dbReference>
<dbReference type="PROSITE" id="PS50102">
    <property type="entry name" value="RRM"/>
    <property type="match status" value="1"/>
</dbReference>
<accession>Q2H0U6</accession>
<sequence>MATQTKHDWADDEDLEETTTTTAPTTDLPPPQKIQNKDGTWTIIEYRINDLGQKVKATRRVRYVVRREVVNPRVAERKTWAKFGDSANDPKGPAPDTTTVGENIIFRPSVNWRKEAKDEANDPNAQAMKDKLKDKKVKCRICNGEHFTARCPYKDTMAPIGEAGPADVAAGMGDEPAAAGPAAAGAAGAGKKGSYVPPAMRAGAGGAQGERMGGKYGERDDLATLRVTNVSEMAEEQELRDMFERFGRVTRVFLAKDRDTGMAKGFAFISYADRDDAVKACNKMDGFGFRHLILRVEFAKKAQ</sequence>
<organism>
    <name type="scientific">Chaetomium globosum (strain ATCC 6205 / CBS 148.51 / DSM 1962 / NBRC 6347 / NRRL 1970)</name>
    <name type="common">Soil fungus</name>
    <dbReference type="NCBI Taxonomy" id="306901"/>
    <lineage>
        <taxon>Eukaryota</taxon>
        <taxon>Fungi</taxon>
        <taxon>Dikarya</taxon>
        <taxon>Ascomycota</taxon>
        <taxon>Pezizomycotina</taxon>
        <taxon>Sordariomycetes</taxon>
        <taxon>Sordariomycetidae</taxon>
        <taxon>Sordariales</taxon>
        <taxon>Chaetomiaceae</taxon>
        <taxon>Chaetomium</taxon>
    </lineage>
</organism>
<gene>
    <name evidence="1" type="primary">TIF35</name>
    <name type="ORF">CHGG_04600</name>
</gene>
<reference key="1">
    <citation type="journal article" date="2015" name="Genome Announc.">
        <title>Draft genome sequence of the cellulolytic fungus Chaetomium globosum.</title>
        <authorList>
            <person name="Cuomo C.A."/>
            <person name="Untereiner W.A."/>
            <person name="Ma L.-J."/>
            <person name="Grabherr M."/>
            <person name="Birren B.W."/>
        </authorList>
    </citation>
    <scope>NUCLEOTIDE SEQUENCE [LARGE SCALE GENOMIC DNA]</scope>
    <source>
        <strain>ATCC 6205 / CBS 148.51 / DSM 1962 / NBRC 6347 / NRRL 1970</strain>
    </source>
</reference>
<comment type="function">
    <text evidence="1">RNA-binding component of the eukaryotic translation initiation factor 3 (eIF-3) complex, which is involved in protein synthesis of a specialized repertoire of mRNAs and, together with other initiation factors, stimulates binding of mRNA and methionyl-tRNAi to the 40S ribosome. The eIF-3 complex specifically targets and initiates translation of a subset of mRNAs involved in cell proliferation. This subunit can bind 18S rRNA.</text>
</comment>
<comment type="subunit">
    <text evidence="1">Component of the eukaryotic translation initiation factor 3 (eIF-3) complex.</text>
</comment>
<comment type="subcellular location">
    <subcellularLocation>
        <location evidence="1">Cytoplasm</location>
    </subcellularLocation>
</comment>
<comment type="similarity">
    <text evidence="1">Belongs to the eIF-3 subunit G family.</text>
</comment>
<protein>
    <recommendedName>
        <fullName evidence="1">Eukaryotic translation initiation factor 3 subunit G</fullName>
        <shortName evidence="1">eIF3g</shortName>
    </recommendedName>
    <alternativeName>
        <fullName evidence="1">Eukaryotic translation initiation factor 3 RNA-binding subunit</fullName>
        <shortName evidence="1">eIF-3 RNA-binding subunit</shortName>
    </alternativeName>
    <alternativeName>
        <fullName evidence="1">Translation initiation factor eIF3 p33 subunit homolog</fullName>
        <shortName evidence="1">eIF3 p33 homolog</shortName>
    </alternativeName>
</protein>
<evidence type="ECO:0000255" key="1">
    <source>
        <dbReference type="HAMAP-Rule" id="MF_03006"/>
    </source>
</evidence>
<evidence type="ECO:0000256" key="2">
    <source>
        <dbReference type="SAM" id="MobiDB-lite"/>
    </source>
</evidence>
<feature type="chain" id="PRO_0000365440" description="Eukaryotic translation initiation factor 3 subunit G">
    <location>
        <begin position="1"/>
        <end position="303"/>
    </location>
</feature>
<feature type="domain" description="RRM" evidence="1">
    <location>
        <begin position="223"/>
        <end position="301"/>
    </location>
</feature>
<feature type="region of interest" description="Disordered" evidence="2">
    <location>
        <begin position="1"/>
        <end position="38"/>
    </location>
</feature>
<name>EIF3G_CHAGB</name>
<proteinExistence type="inferred from homology"/>